<keyword id="KW-0349">Heme</keyword>
<keyword id="KW-0408">Iron</keyword>
<keyword id="KW-0456">Lyase</keyword>
<keyword id="KW-0479">Metal-binding</keyword>
<keyword id="KW-1185">Reference proteome</keyword>
<protein>
    <recommendedName>
        <fullName evidence="8">Divinyl ether synthase CYP74D2</fullName>
    </recommendedName>
    <alternativeName>
        <fullName evidence="5">9-divinyl ether synthase</fullName>
        <shortName evidence="5">StDES</shortName>
    </alternativeName>
    <alternativeName>
        <fullName evidence="5">Colneleate synthase</fullName>
        <ecNumber evidence="2">4.2.1.121</ecNumber>
    </alternativeName>
    <alternativeName>
        <fullName evidence="6">Cytochrome P450 74D2</fullName>
    </alternativeName>
</protein>
<comment type="function">
    <text evidence="2 3">Involved in the biosynthesis of the anti-fungal and antibacterial toxins colneleate and colnelenate (PubMed:11696374, PubMed:17258245). Can use (9S)-hydroperoxy-(10E,12Z)-octadecadienoate (9-HPOD) and (9S)-hydroperoxy-(10E,12Z,15Z)-octadecatrienoate (9-HPOT) as substrates but has no activity with the corresponding 13-hydroperoxides (13-HPOD and 13-HPOT) (PubMed:11696374).</text>
</comment>
<comment type="catalytic activity">
    <reaction evidence="2">
        <text>(9S)-hydroperoxy-(10E,12Z)-octadecadienoate = colneleate + H2O</text>
        <dbReference type="Rhea" id="RHEA:28174"/>
        <dbReference type="ChEBI" id="CHEBI:15377"/>
        <dbReference type="ChEBI" id="CHEBI:60955"/>
        <dbReference type="ChEBI" id="CHEBI:60957"/>
        <dbReference type="EC" id="4.2.1.121"/>
    </reaction>
    <physiologicalReaction direction="left-to-right" evidence="2">
        <dbReference type="Rhea" id="RHEA:28175"/>
    </physiologicalReaction>
</comment>
<comment type="catalytic activity">
    <reaction evidence="2">
        <text>(9S)-hydroperoxy-(10E,12Z,15Z)-octadecatrienoate = colnelenate + H2O</text>
        <dbReference type="Rhea" id="RHEA:28178"/>
        <dbReference type="ChEBI" id="CHEBI:15377"/>
        <dbReference type="ChEBI" id="CHEBI:60960"/>
        <dbReference type="ChEBI" id="CHEBI:60962"/>
        <dbReference type="EC" id="4.2.1.121"/>
    </reaction>
    <physiologicalReaction direction="left-to-right" evidence="2">
        <dbReference type="Rhea" id="RHEA:28179"/>
    </physiologicalReaction>
</comment>
<comment type="biophysicochemical properties">
    <kinetics>
        <KM evidence="2">17.4 uM for (9S)-hydroperoxy-(10E,12Z)-octadecadienoate</KM>
        <KM evidence="2">26.1 uM for (9S)-hydroperoxy-(10E,12Z,15Z)-octadecatrienoate</KM>
        <Vmax evidence="2">5.3 umol/min/mg enzyme with (9S)-hydroperoxy-(10E,12Z)-octadecadienoate</Vmax>
        <Vmax evidence="2">2.8 umol/min/mg enzyme with (9S)-hydroperoxy-(10E,12Z,15Z)-octadecatrienoate as substrate</Vmax>
    </kinetics>
    <phDependence>
        <text evidence="2">Optimum pH is 5.5 - 7.5.</text>
    </phDependence>
</comment>
<comment type="tissue specificity">
    <text evidence="2">Expressed in roots.</text>
</comment>
<comment type="induction">
    <text evidence="2 4">Up-regulated 6 and 12 hours-post-infection after infiltration with P.syringae pv. maculicola and between 2 and 4 dpi after infection by P.infestans.</text>
</comment>
<comment type="similarity">
    <text evidence="7">Belongs to the cytochrome P450 family. 9-divinyl ether synthase subfamily.</text>
</comment>
<evidence type="ECO:0000250" key="1">
    <source>
        <dbReference type="UniProtKB" id="Q96242"/>
    </source>
</evidence>
<evidence type="ECO:0000269" key="2">
    <source>
    </source>
</evidence>
<evidence type="ECO:0000269" key="3">
    <source>
    </source>
</evidence>
<evidence type="ECO:0000269" key="4">
    <source>
    </source>
</evidence>
<evidence type="ECO:0000303" key="5">
    <source>
    </source>
</evidence>
<evidence type="ECO:0000303" key="6">
    <source ref="3"/>
</evidence>
<evidence type="ECO:0000305" key="7"/>
<evidence type="ECO:0000305" key="8">
    <source ref="3"/>
</evidence>
<dbReference type="EC" id="4.2.1.121" evidence="2"/>
<dbReference type="EMBL" id="AJ309541">
    <property type="protein sequence ID" value="CAC28152.1"/>
    <property type="molecule type" value="mRNA"/>
</dbReference>
<dbReference type="RefSeq" id="NP_001305517.1">
    <property type="nucleotide sequence ID" value="NM_001318588.1"/>
</dbReference>
<dbReference type="SMR" id="Q9AVQ1"/>
<dbReference type="STRING" id="4113.Q9AVQ1"/>
<dbReference type="PaxDb" id="4113-PGSC0003DMT400064771"/>
<dbReference type="GeneID" id="102588225"/>
<dbReference type="KEGG" id="ag:CAC28152"/>
<dbReference type="KEGG" id="sot:102588225"/>
<dbReference type="eggNOG" id="ENOG502QV50">
    <property type="taxonomic scope" value="Eukaryota"/>
</dbReference>
<dbReference type="InParanoid" id="Q9AVQ1"/>
<dbReference type="OrthoDB" id="2789670at2759"/>
<dbReference type="BioCyc" id="MetaCyc:MONOMER-12728"/>
<dbReference type="BRENDA" id="4.2.1.121">
    <property type="organism ID" value="5757"/>
</dbReference>
<dbReference type="Proteomes" id="UP000011115">
    <property type="component" value="Unassembled WGS sequence"/>
</dbReference>
<dbReference type="ExpressionAtlas" id="Q9AVQ1">
    <property type="expression patterns" value="baseline"/>
</dbReference>
<dbReference type="GO" id="GO:0102895">
    <property type="term" value="F:colneleate synthase activity"/>
    <property type="evidence" value="ECO:0007669"/>
    <property type="project" value="UniProtKB-EC"/>
</dbReference>
<dbReference type="GO" id="GO:0020037">
    <property type="term" value="F:heme binding"/>
    <property type="evidence" value="ECO:0007669"/>
    <property type="project" value="InterPro"/>
</dbReference>
<dbReference type="GO" id="GO:0005506">
    <property type="term" value="F:iron ion binding"/>
    <property type="evidence" value="ECO:0007669"/>
    <property type="project" value="InterPro"/>
</dbReference>
<dbReference type="GO" id="GO:0004497">
    <property type="term" value="F:monooxygenase activity"/>
    <property type="evidence" value="ECO:0000318"/>
    <property type="project" value="GO_Central"/>
</dbReference>
<dbReference type="GO" id="GO:0016705">
    <property type="term" value="F:oxidoreductase activity, acting on paired donors, with incorporation or reduction of molecular oxygen"/>
    <property type="evidence" value="ECO:0007669"/>
    <property type="project" value="InterPro"/>
</dbReference>
<dbReference type="CDD" id="cd11071">
    <property type="entry name" value="CYP74"/>
    <property type="match status" value="1"/>
</dbReference>
<dbReference type="FunFam" id="1.10.630.10:FF:000024">
    <property type="entry name" value="Allene oxide synthase, chloroplastic"/>
    <property type="match status" value="1"/>
</dbReference>
<dbReference type="Gene3D" id="1.10.630.10">
    <property type="entry name" value="Cytochrome P450"/>
    <property type="match status" value="1"/>
</dbReference>
<dbReference type="InterPro" id="IPR001128">
    <property type="entry name" value="Cyt_P450"/>
</dbReference>
<dbReference type="InterPro" id="IPR002403">
    <property type="entry name" value="Cyt_P450_E_grp-IV"/>
</dbReference>
<dbReference type="InterPro" id="IPR036396">
    <property type="entry name" value="Cyt_P450_sf"/>
</dbReference>
<dbReference type="PANTHER" id="PTHR24286:SF253">
    <property type="entry name" value="9-DIVINYL ETHER SYNTHASE"/>
    <property type="match status" value="1"/>
</dbReference>
<dbReference type="PANTHER" id="PTHR24286">
    <property type="entry name" value="CYTOCHROME P450 26"/>
    <property type="match status" value="1"/>
</dbReference>
<dbReference type="Pfam" id="PF00067">
    <property type="entry name" value="p450"/>
    <property type="match status" value="1"/>
</dbReference>
<dbReference type="PRINTS" id="PR00465">
    <property type="entry name" value="EP450IV"/>
</dbReference>
<dbReference type="SUPFAM" id="SSF48264">
    <property type="entry name" value="Cytochrome P450"/>
    <property type="match status" value="1"/>
</dbReference>
<proteinExistence type="evidence at protein level"/>
<reference key="1">
    <citation type="journal article" date="2001" name="FEBS Lett.">
        <title>A pathogen-inducible divinyl ether synthase (CYP74D) from elicitor-treated potato suspension cells.</title>
        <authorList>
            <person name="Stumpe M."/>
            <person name="Kandzia R."/>
            <person name="Gobel C."/>
            <person name="Rosahl S."/>
            <person name="Feussner I."/>
        </authorList>
    </citation>
    <scope>NUCLEOTIDE SEQUENCE [MRNA]</scope>
    <scope>FUNCTION</scope>
    <scope>CATALYTIC ACTIVITY</scope>
    <scope>BIOPHYSICOCHEMICAL PROPERTIES</scope>
    <scope>INDUCTION BY PATHOGEN</scope>
    <scope>TISSUE SPECIFICITY</scope>
    <source>
        <strain>cv. Desiree</strain>
    </source>
</reference>
<reference key="2">
    <citation type="journal article" date="2007" name="Phytochemistry">
        <title>Reduction of divinyl ether-containing polyunsaturated fatty acids in transgenic potato plants.</title>
        <authorList>
            <person name="Eschen-Lippold L."/>
            <person name="Rothe G."/>
            <person name="Stumpe M."/>
            <person name="Goebel C."/>
            <person name="Feussner I."/>
            <person name="Rosahl S."/>
        </authorList>
    </citation>
    <scope>FUNCTION</scope>
    <source>
        <strain>cv. Desiree</strain>
    </source>
</reference>
<reference key="3">
    <citation type="journal article" date="2008" name="Trop. Plant Biol.">
        <title>Comparison of cytochrome P450 genes from six plant genomes.</title>
        <authorList>
            <person name="Nelson D.R."/>
            <person name="Ming R."/>
            <person name="Alam M."/>
            <person name="Schuler M.A."/>
        </authorList>
    </citation>
    <scope>NOMENCLATURE</scope>
</reference>
<reference key="4">
    <citation type="journal article" date="2008" name="Plant Physiol. Biochem.">
        <title>Changes in oxylipin synthesis after Phytophthora infestans infection of potato leaves do not correlate with resistance.</title>
        <authorList>
            <person name="Fauconnier M.L."/>
            <person name="Rojas-Beltran J."/>
            <person name="Dupuis B."/>
            <person name="Delaplace P."/>
            <person name="Frettinger P."/>
            <person name="Gosset V."/>
            <person name="du Jardin P."/>
        </authorList>
    </citation>
    <scope>INDUCTION BY PATHOGEN</scope>
    <source>
        <strain>cv. Bintje</strain>
        <strain>cv. Cara</strain>
        <strain>cv. Desiree</strain>
        <strain>cv. Esterling</strain>
        <strain>cv. Matilda</strain>
    </source>
</reference>
<sequence length="478" mass="54114">MSSYSELSNLPIREIPGDYGFPIISAIKDRYDYFYNQGEDAWFHNKAEKYKSTVVKINMAPGPFTSNDYKLVAFLDANSFVCMFDNSLIDKTDTLGGTFKPGKEYYSGYRPVAFIDTKDPNHAALKGYILSAFAKRHNLFIPLFRNSLSDHLFNNLEKQVTEQGKSDFNALLPTMTFNFIFRLLCDQTNPSDTVLGAQGPEHLRKWLFPQLIPSLSAKKLPNIIEDTLFHNFLIPFGFIKSDYNKLVDAFSKSAVSILDEAEKLGIKREEAVQNILFLVGINMFAGLNAFSPHLFRFVGEAGASLHTQLAKEIRTVIKEEGGAITLSAINKMSLVKSVVYETLRLRPPVPLQYGKAKKDFMVQSHDASYKINKGQFVVGYQPMASRDPKIFANPDEFVPDRFMNDGEKMLKHVLWSNGRETENPAPDNKQCPGKDLVHLLGRLILVEFFMRYDTFTVEITPLFRAPNVAFKTLTKASK</sequence>
<name>DES_SOLTU</name>
<feature type="chain" id="PRO_0000415391" description="Divinyl ether synthase CYP74D2">
    <location>
        <begin position="1"/>
        <end position="478"/>
    </location>
</feature>
<feature type="binding site" description="axial binding residue" evidence="1">
    <location>
        <position position="431"/>
    </location>
    <ligand>
        <name>heme</name>
        <dbReference type="ChEBI" id="CHEBI:30413"/>
    </ligand>
    <ligandPart>
        <name>Fe</name>
        <dbReference type="ChEBI" id="CHEBI:18248"/>
    </ligandPart>
</feature>
<organism>
    <name type="scientific">Solanum tuberosum</name>
    <name type="common">Potato</name>
    <dbReference type="NCBI Taxonomy" id="4113"/>
    <lineage>
        <taxon>Eukaryota</taxon>
        <taxon>Viridiplantae</taxon>
        <taxon>Streptophyta</taxon>
        <taxon>Embryophyta</taxon>
        <taxon>Tracheophyta</taxon>
        <taxon>Spermatophyta</taxon>
        <taxon>Magnoliopsida</taxon>
        <taxon>eudicotyledons</taxon>
        <taxon>Gunneridae</taxon>
        <taxon>Pentapetalae</taxon>
        <taxon>asterids</taxon>
        <taxon>lamiids</taxon>
        <taxon>Solanales</taxon>
        <taxon>Solanaceae</taxon>
        <taxon>Solanoideae</taxon>
        <taxon>Solaneae</taxon>
        <taxon>Solanum</taxon>
    </lineage>
</organism>
<gene>
    <name evidence="5" type="primary">DES</name>
    <name evidence="6" type="synonym">CYP74D2</name>
</gene>
<accession>Q9AVQ1</accession>